<gene>
    <name type="primary">SDS23</name>
    <name type="ORF">PICST_88034</name>
</gene>
<dbReference type="EMBL" id="CP000496">
    <property type="protein sequence ID" value="ABN64657.2"/>
    <property type="molecule type" value="Genomic_DNA"/>
</dbReference>
<dbReference type="RefSeq" id="XP_001382686.2">
    <property type="nucleotide sequence ID" value="XM_001382649.1"/>
</dbReference>
<dbReference type="SMR" id="A3LQC5"/>
<dbReference type="FunCoup" id="A3LQC5">
    <property type="interactions" value="271"/>
</dbReference>
<dbReference type="STRING" id="322104.A3LQC5"/>
<dbReference type="GeneID" id="4837336"/>
<dbReference type="KEGG" id="pic:PICST_88034"/>
<dbReference type="eggNOG" id="KOG1764">
    <property type="taxonomic scope" value="Eukaryota"/>
</dbReference>
<dbReference type="HOGENOM" id="CLU_024459_1_0_1"/>
<dbReference type="InParanoid" id="A3LQC5"/>
<dbReference type="OMA" id="MAPTNLC"/>
<dbReference type="OrthoDB" id="449052at2759"/>
<dbReference type="Proteomes" id="UP000002258">
    <property type="component" value="Chromosome 2"/>
</dbReference>
<dbReference type="GO" id="GO:0005737">
    <property type="term" value="C:cytoplasm"/>
    <property type="evidence" value="ECO:0007669"/>
    <property type="project" value="UniProtKB-SubCell"/>
</dbReference>
<dbReference type="GO" id="GO:0005634">
    <property type="term" value="C:nucleus"/>
    <property type="evidence" value="ECO:0007669"/>
    <property type="project" value="UniProtKB-SubCell"/>
</dbReference>
<dbReference type="GO" id="GO:0004865">
    <property type="term" value="F:protein serine/threonine phosphatase inhibitor activity"/>
    <property type="evidence" value="ECO:0007669"/>
    <property type="project" value="TreeGrafter"/>
</dbReference>
<dbReference type="GO" id="GO:0042149">
    <property type="term" value="P:cellular response to glucose starvation"/>
    <property type="evidence" value="ECO:0007669"/>
    <property type="project" value="InterPro"/>
</dbReference>
<dbReference type="GO" id="GO:0030071">
    <property type="term" value="P:regulation of mitotic metaphase/anaphase transition"/>
    <property type="evidence" value="ECO:0007669"/>
    <property type="project" value="InterPro"/>
</dbReference>
<dbReference type="CDD" id="cd02205">
    <property type="entry name" value="CBS_pair_SF"/>
    <property type="match status" value="1"/>
</dbReference>
<dbReference type="Gene3D" id="3.10.580.10">
    <property type="entry name" value="CBS-domain"/>
    <property type="match status" value="2"/>
</dbReference>
<dbReference type="InterPro" id="IPR050511">
    <property type="entry name" value="AMPK_gamma/SDS23_families"/>
</dbReference>
<dbReference type="InterPro" id="IPR000644">
    <property type="entry name" value="CBS_dom"/>
</dbReference>
<dbReference type="InterPro" id="IPR046342">
    <property type="entry name" value="CBS_dom_sf"/>
</dbReference>
<dbReference type="InterPro" id="IPR016711">
    <property type="entry name" value="Ssd23"/>
</dbReference>
<dbReference type="PANTHER" id="PTHR13780">
    <property type="entry name" value="AMP-ACTIVATED PROTEIN KINASE, GAMMA REGULATORY SUBUNIT"/>
    <property type="match status" value="1"/>
</dbReference>
<dbReference type="PANTHER" id="PTHR13780:SF36">
    <property type="entry name" value="CBS DOMAIN-CONTAINING PROTEIN"/>
    <property type="match status" value="1"/>
</dbReference>
<dbReference type="Pfam" id="PF00571">
    <property type="entry name" value="CBS"/>
    <property type="match status" value="2"/>
</dbReference>
<dbReference type="PIRSF" id="PIRSF018148">
    <property type="entry name" value="UCP018148_CBS_YBR214w"/>
    <property type="match status" value="1"/>
</dbReference>
<dbReference type="SMART" id="SM00116">
    <property type="entry name" value="CBS"/>
    <property type="match status" value="3"/>
</dbReference>
<dbReference type="SUPFAM" id="SSF54631">
    <property type="entry name" value="CBS-domain pair"/>
    <property type="match status" value="2"/>
</dbReference>
<dbReference type="PROSITE" id="PS51371">
    <property type="entry name" value="CBS"/>
    <property type="match status" value="2"/>
</dbReference>
<keyword id="KW-0129">CBS domain</keyword>
<keyword id="KW-0963">Cytoplasm</keyword>
<keyword id="KW-0539">Nucleus</keyword>
<keyword id="KW-1185">Reference proteome</keyword>
<keyword id="KW-0677">Repeat</keyword>
<comment type="function">
    <text evidence="1">Involved in DNA replication and cell separation.</text>
</comment>
<comment type="subcellular location">
    <subcellularLocation>
        <location evidence="1">Cytoplasm</location>
    </subcellularLocation>
    <subcellularLocation>
        <location evidence="1">Nucleus</location>
    </subcellularLocation>
</comment>
<comment type="similarity">
    <text evidence="4">Belongs to the SDS23 family.</text>
</comment>
<sequence>MSNPPFQRQQPSSPLTTPNHHPSNHQHHASRKPSIVELLSSPPPLPNNTIDDEIHQFSLSRNTSISSRTSSFSQQQHGAPHHGSNSHHLSVSGMDWSEIPLSELTESNKLIYINSSYSVQKAFETLVSNNLTSVPVSISSSNENDLSSCLTFDYSDLNTYLLLIMNKINLSELSVSEIGNEHDSTAKKHEIITQTINKAKRGEEVPIEFIIKLHPKNPFIKFTENDTLFKVMETLGNGVHRVAITNLESTKITGILSQRRLIKYMWENARRFPSLDFYLNSTLQDLKIGSSTPIFIYEDQLLIEALYKMFNERVSSLAVIDRTKSLIGNISIVDVKNVSSSKNSHLLFKSVLTFISYNLSQKGIEEGQDQYPIFHVNKQSSLGRVIAKLVATQSHRLWIVESNTRTHQNSISSPVTIEATLNVSANPSSASSSNANTPEGNFGLPGKLIGVVTLTDILGLFATSKGTKTDPQFARNQRRRSSTSTTRSSIDSAISVGDGSARTTNANADSEIFRKSYTAAAKNESAISKD</sequence>
<evidence type="ECO:0000250" key="1"/>
<evidence type="ECO:0000255" key="2">
    <source>
        <dbReference type="PROSITE-ProRule" id="PRU00703"/>
    </source>
</evidence>
<evidence type="ECO:0000256" key="3">
    <source>
        <dbReference type="SAM" id="MobiDB-lite"/>
    </source>
</evidence>
<evidence type="ECO:0000305" key="4"/>
<feature type="chain" id="PRO_0000324958" description="Protein SDS23">
    <location>
        <begin position="1"/>
        <end position="530"/>
    </location>
</feature>
<feature type="domain" description="CBS 1" evidence="2">
    <location>
        <begin position="213"/>
        <end position="274"/>
    </location>
</feature>
<feature type="domain" description="CBS 2" evidence="2">
    <location>
        <begin position="289"/>
        <end position="347"/>
    </location>
</feature>
<feature type="region of interest" description="Disordered" evidence="3">
    <location>
        <begin position="1"/>
        <end position="51"/>
    </location>
</feature>
<feature type="region of interest" description="Disordered" evidence="3">
    <location>
        <begin position="65"/>
        <end position="89"/>
    </location>
</feature>
<feature type="region of interest" description="Disordered" evidence="3">
    <location>
        <begin position="467"/>
        <end position="509"/>
    </location>
</feature>
<feature type="compositionally biased region" description="Polar residues" evidence="3">
    <location>
        <begin position="1"/>
        <end position="21"/>
    </location>
</feature>
<feature type="compositionally biased region" description="Basic residues" evidence="3">
    <location>
        <begin position="22"/>
        <end position="31"/>
    </location>
</feature>
<name>SDS23_PICST</name>
<proteinExistence type="inferred from homology"/>
<accession>A3LQC5</accession>
<protein>
    <recommendedName>
        <fullName>Protein SDS23</fullName>
    </recommendedName>
</protein>
<reference key="1">
    <citation type="journal article" date="2007" name="Nat. Biotechnol.">
        <title>Genome sequence of the lignocellulose-bioconverting and xylose-fermenting yeast Pichia stipitis.</title>
        <authorList>
            <person name="Jeffries T.W."/>
            <person name="Grigoriev I.V."/>
            <person name="Grimwood J."/>
            <person name="Laplaza J.M."/>
            <person name="Aerts A."/>
            <person name="Salamov A."/>
            <person name="Schmutz J."/>
            <person name="Lindquist E."/>
            <person name="Dehal P."/>
            <person name="Shapiro H."/>
            <person name="Jin Y.-S."/>
            <person name="Passoth V."/>
            <person name="Richardson P.M."/>
        </authorList>
    </citation>
    <scope>NUCLEOTIDE SEQUENCE [LARGE SCALE GENOMIC DNA]</scope>
    <source>
        <strain>ATCC 58785 / CBS 6054 / NBRC 10063 / NRRL Y-11545</strain>
    </source>
</reference>
<organism>
    <name type="scientific">Scheffersomyces stipitis (strain ATCC 58785 / CBS 6054 / NBRC 10063 / NRRL Y-11545)</name>
    <name type="common">Yeast</name>
    <name type="synonym">Pichia stipitis</name>
    <dbReference type="NCBI Taxonomy" id="322104"/>
    <lineage>
        <taxon>Eukaryota</taxon>
        <taxon>Fungi</taxon>
        <taxon>Dikarya</taxon>
        <taxon>Ascomycota</taxon>
        <taxon>Saccharomycotina</taxon>
        <taxon>Pichiomycetes</taxon>
        <taxon>Debaryomycetaceae</taxon>
        <taxon>Scheffersomyces</taxon>
    </lineage>
</organism>